<organism>
    <name type="scientific">Clostridium acetobutylicum (strain ATCC 824 / DSM 792 / JCM 1419 / IAM 19013 / LMG 5710 / NBRC 13948 / NRRL B-527 / VKM B-1787 / 2291 / W)</name>
    <dbReference type="NCBI Taxonomy" id="272562"/>
    <lineage>
        <taxon>Bacteria</taxon>
        <taxon>Bacillati</taxon>
        <taxon>Bacillota</taxon>
        <taxon>Clostridia</taxon>
        <taxon>Eubacteriales</taxon>
        <taxon>Clostridiaceae</taxon>
        <taxon>Clostridium</taxon>
    </lineage>
</organism>
<protein>
    <recommendedName>
        <fullName evidence="1">Nucleoid-associated protein CA_C0126</fullName>
    </recommendedName>
</protein>
<sequence length="112" mass="11986">MAKGGFPGMGGGNMNNLIKQAQKFQKQMEDMQKEIENKEFTATVGGGAVSATVSGKKEITEIKIKPEVVDPDDVEMLQDLILSACNEALKKAEEETSGEMKKLTGGLNIPGL</sequence>
<proteinExistence type="inferred from homology"/>
<name>Y126_CLOAB</name>
<evidence type="ECO:0000255" key="1">
    <source>
        <dbReference type="HAMAP-Rule" id="MF_00274"/>
    </source>
</evidence>
<evidence type="ECO:0000256" key="2">
    <source>
        <dbReference type="SAM" id="MobiDB-lite"/>
    </source>
</evidence>
<keyword id="KW-0963">Cytoplasm</keyword>
<keyword id="KW-0238">DNA-binding</keyword>
<keyword id="KW-1185">Reference proteome</keyword>
<dbReference type="EMBL" id="AE001437">
    <property type="protein sequence ID" value="AAK78111.1"/>
    <property type="molecule type" value="Genomic_DNA"/>
</dbReference>
<dbReference type="PIR" id="D96915">
    <property type="entry name" value="D96915"/>
</dbReference>
<dbReference type="RefSeq" id="NP_346771.1">
    <property type="nucleotide sequence ID" value="NC_003030.1"/>
</dbReference>
<dbReference type="RefSeq" id="WP_010963453.1">
    <property type="nucleotide sequence ID" value="NC_003030.1"/>
</dbReference>
<dbReference type="SMR" id="Q97MR5"/>
<dbReference type="STRING" id="272562.CA_C0126"/>
<dbReference type="KEGG" id="cac:CA_C0126"/>
<dbReference type="PATRIC" id="fig|272562.8.peg.310"/>
<dbReference type="eggNOG" id="COG0718">
    <property type="taxonomic scope" value="Bacteria"/>
</dbReference>
<dbReference type="HOGENOM" id="CLU_140930_1_0_9"/>
<dbReference type="OrthoDB" id="9795263at2"/>
<dbReference type="Proteomes" id="UP000000814">
    <property type="component" value="Chromosome"/>
</dbReference>
<dbReference type="GO" id="GO:0043590">
    <property type="term" value="C:bacterial nucleoid"/>
    <property type="evidence" value="ECO:0007669"/>
    <property type="project" value="UniProtKB-UniRule"/>
</dbReference>
<dbReference type="GO" id="GO:0005829">
    <property type="term" value="C:cytosol"/>
    <property type="evidence" value="ECO:0007669"/>
    <property type="project" value="TreeGrafter"/>
</dbReference>
<dbReference type="GO" id="GO:0003677">
    <property type="term" value="F:DNA binding"/>
    <property type="evidence" value="ECO:0007669"/>
    <property type="project" value="UniProtKB-UniRule"/>
</dbReference>
<dbReference type="FunFam" id="3.30.1310.10:FF:000002">
    <property type="entry name" value="Nucleoid-associated protein IKC_06587"/>
    <property type="match status" value="1"/>
</dbReference>
<dbReference type="Gene3D" id="3.30.1310.10">
    <property type="entry name" value="Nucleoid-associated protein YbaB-like domain"/>
    <property type="match status" value="1"/>
</dbReference>
<dbReference type="HAMAP" id="MF_00274">
    <property type="entry name" value="DNA_YbaB_EbfC"/>
    <property type="match status" value="1"/>
</dbReference>
<dbReference type="InterPro" id="IPR036894">
    <property type="entry name" value="YbaB-like_sf"/>
</dbReference>
<dbReference type="InterPro" id="IPR004401">
    <property type="entry name" value="YbaB/EbfC"/>
</dbReference>
<dbReference type="NCBIfam" id="TIGR00103">
    <property type="entry name" value="DNA_YbaB_EbfC"/>
    <property type="match status" value="1"/>
</dbReference>
<dbReference type="PANTHER" id="PTHR33449">
    <property type="entry name" value="NUCLEOID-ASSOCIATED PROTEIN YBAB"/>
    <property type="match status" value="1"/>
</dbReference>
<dbReference type="PANTHER" id="PTHR33449:SF1">
    <property type="entry name" value="NUCLEOID-ASSOCIATED PROTEIN YBAB"/>
    <property type="match status" value="1"/>
</dbReference>
<dbReference type="Pfam" id="PF02575">
    <property type="entry name" value="YbaB_DNA_bd"/>
    <property type="match status" value="1"/>
</dbReference>
<dbReference type="PIRSF" id="PIRSF004555">
    <property type="entry name" value="UCP004555"/>
    <property type="match status" value="1"/>
</dbReference>
<dbReference type="SUPFAM" id="SSF82607">
    <property type="entry name" value="YbaB-like"/>
    <property type="match status" value="1"/>
</dbReference>
<reference key="1">
    <citation type="journal article" date="2001" name="J. Bacteriol.">
        <title>Genome sequence and comparative analysis of the solvent-producing bacterium Clostridium acetobutylicum.</title>
        <authorList>
            <person name="Noelling J."/>
            <person name="Breton G."/>
            <person name="Omelchenko M.V."/>
            <person name="Makarova K.S."/>
            <person name="Zeng Q."/>
            <person name="Gibson R."/>
            <person name="Lee H.M."/>
            <person name="Dubois J."/>
            <person name="Qiu D."/>
            <person name="Hitti J."/>
            <person name="Wolf Y.I."/>
            <person name="Tatusov R.L."/>
            <person name="Sabathe F."/>
            <person name="Doucette-Stamm L.A."/>
            <person name="Soucaille P."/>
            <person name="Daly M.J."/>
            <person name="Bennett G.N."/>
            <person name="Koonin E.V."/>
            <person name="Smith D.R."/>
        </authorList>
    </citation>
    <scope>NUCLEOTIDE SEQUENCE [LARGE SCALE GENOMIC DNA]</scope>
    <source>
        <strain>ATCC 824 / DSM 792 / JCM 1419 / IAM 19013 / LMG 5710 / NBRC 13948 / NRRL B-527 / VKM B-1787 / 2291 / W</strain>
    </source>
</reference>
<comment type="function">
    <text evidence="1">Binds to DNA and alters its conformation. May be involved in regulation of gene expression, nucleoid organization and DNA protection.</text>
</comment>
<comment type="subunit">
    <text evidence="1">Homodimer.</text>
</comment>
<comment type="subcellular location">
    <subcellularLocation>
        <location evidence="1">Cytoplasm</location>
        <location evidence="1">Nucleoid</location>
    </subcellularLocation>
</comment>
<comment type="similarity">
    <text evidence="1">Belongs to the YbaB/EbfC family.</text>
</comment>
<gene>
    <name type="ordered locus">CA_C0126</name>
</gene>
<feature type="chain" id="PRO_0000170384" description="Nucleoid-associated protein CA_C0126">
    <location>
        <begin position="1"/>
        <end position="112"/>
    </location>
</feature>
<feature type="region of interest" description="Disordered" evidence="2">
    <location>
        <begin position="93"/>
        <end position="112"/>
    </location>
</feature>
<feature type="compositionally biased region" description="Basic and acidic residues" evidence="2">
    <location>
        <begin position="93"/>
        <end position="102"/>
    </location>
</feature>
<accession>Q97MR5</accession>